<keyword id="KW-0687">Ribonucleoprotein</keyword>
<keyword id="KW-0689">Ribosomal protein</keyword>
<keyword id="KW-0694">RNA-binding</keyword>
<keyword id="KW-0699">rRNA-binding</keyword>
<keyword id="KW-0820">tRNA-binding</keyword>
<comment type="function">
    <text evidence="1">Located at the top of the head of the 30S subunit, it contacts several helices of the 16S rRNA. In the 70S ribosome it contacts the 23S rRNA (bridge B1a) and protein L5 of the 50S subunit (bridge B1b), connecting the 2 subunits; these bridges are implicated in subunit movement. Contacts the tRNAs in the A and P-sites.</text>
</comment>
<comment type="subunit">
    <text evidence="1">Part of the 30S ribosomal subunit. Forms a loose heterodimer with protein S19. Forms two bridges to the 50S subunit in the 70S ribosome.</text>
</comment>
<comment type="similarity">
    <text evidence="1">Belongs to the universal ribosomal protein uS13 family.</text>
</comment>
<organism>
    <name type="scientific">Streptococcus pyogenes serotype M28 (strain MGAS6180)</name>
    <dbReference type="NCBI Taxonomy" id="319701"/>
    <lineage>
        <taxon>Bacteria</taxon>
        <taxon>Bacillati</taxon>
        <taxon>Bacillota</taxon>
        <taxon>Bacilli</taxon>
        <taxon>Lactobacillales</taxon>
        <taxon>Streptococcaceae</taxon>
        <taxon>Streptococcus</taxon>
    </lineage>
</organism>
<proteinExistence type="inferred from homology"/>
<feature type="chain" id="PRO_0000230569" description="Small ribosomal subunit protein uS13">
    <location>
        <begin position="1"/>
        <end position="121"/>
    </location>
</feature>
<feature type="region of interest" description="Disordered" evidence="2">
    <location>
        <begin position="96"/>
        <end position="121"/>
    </location>
</feature>
<feature type="compositionally biased region" description="Basic residues" evidence="2">
    <location>
        <begin position="106"/>
        <end position="121"/>
    </location>
</feature>
<reference key="1">
    <citation type="journal article" date="2005" name="J. Infect. Dis.">
        <title>Genome sequence of a serotype M28 strain of group A Streptococcus: potential new insights into puerperal sepsis and bacterial disease specificity.</title>
        <authorList>
            <person name="Green N.M."/>
            <person name="Zhang S."/>
            <person name="Porcella S.F."/>
            <person name="Nagiec M.J."/>
            <person name="Barbian K.D."/>
            <person name="Beres S.B."/>
            <person name="Lefebvre R.B."/>
            <person name="Musser J.M."/>
        </authorList>
    </citation>
    <scope>NUCLEOTIDE SEQUENCE [LARGE SCALE GENOMIC DNA]</scope>
    <source>
        <strain>MGAS6180</strain>
    </source>
</reference>
<evidence type="ECO:0000255" key="1">
    <source>
        <dbReference type="HAMAP-Rule" id="MF_01315"/>
    </source>
</evidence>
<evidence type="ECO:0000256" key="2">
    <source>
        <dbReference type="SAM" id="MobiDB-lite"/>
    </source>
</evidence>
<evidence type="ECO:0000305" key="3"/>
<name>RS13_STRPM</name>
<sequence>MARIAGVDIPNDKRVVISLTYVYGIGLATSKKILAAAGISEDIRVKDLTSDQEDAIRREVDAIKVEGDLRREVNMNIKRLMEIGSYRGIRHRRGLPVRGQNTKNNARTRKGKAVAIAGKKK</sequence>
<protein>
    <recommendedName>
        <fullName evidence="1">Small ribosomal subunit protein uS13</fullName>
    </recommendedName>
    <alternativeName>
        <fullName evidence="3">30S ribosomal protein S13</fullName>
    </alternativeName>
</protein>
<dbReference type="EMBL" id="CP000056">
    <property type="protein sequence ID" value="AAX71181.1"/>
    <property type="molecule type" value="Genomic_DNA"/>
</dbReference>
<dbReference type="RefSeq" id="WP_002986615.1">
    <property type="nucleotide sequence ID" value="NC_007296.2"/>
</dbReference>
<dbReference type="SMR" id="Q48VS5"/>
<dbReference type="GeneID" id="69900050"/>
<dbReference type="KEGG" id="spb:M28_Spy0067"/>
<dbReference type="HOGENOM" id="CLU_103849_1_1_9"/>
<dbReference type="GO" id="GO:0005829">
    <property type="term" value="C:cytosol"/>
    <property type="evidence" value="ECO:0007669"/>
    <property type="project" value="TreeGrafter"/>
</dbReference>
<dbReference type="GO" id="GO:0015935">
    <property type="term" value="C:small ribosomal subunit"/>
    <property type="evidence" value="ECO:0007669"/>
    <property type="project" value="TreeGrafter"/>
</dbReference>
<dbReference type="GO" id="GO:0019843">
    <property type="term" value="F:rRNA binding"/>
    <property type="evidence" value="ECO:0007669"/>
    <property type="project" value="UniProtKB-UniRule"/>
</dbReference>
<dbReference type="GO" id="GO:0003735">
    <property type="term" value="F:structural constituent of ribosome"/>
    <property type="evidence" value="ECO:0007669"/>
    <property type="project" value="InterPro"/>
</dbReference>
<dbReference type="GO" id="GO:0000049">
    <property type="term" value="F:tRNA binding"/>
    <property type="evidence" value="ECO:0007669"/>
    <property type="project" value="UniProtKB-UniRule"/>
</dbReference>
<dbReference type="GO" id="GO:0006412">
    <property type="term" value="P:translation"/>
    <property type="evidence" value="ECO:0007669"/>
    <property type="project" value="UniProtKB-UniRule"/>
</dbReference>
<dbReference type="FunFam" id="1.10.8.50:FF:000001">
    <property type="entry name" value="30S ribosomal protein S13"/>
    <property type="match status" value="1"/>
</dbReference>
<dbReference type="FunFam" id="4.10.910.10:FF:000001">
    <property type="entry name" value="30S ribosomal protein S13"/>
    <property type="match status" value="1"/>
</dbReference>
<dbReference type="Gene3D" id="1.10.8.50">
    <property type="match status" value="1"/>
</dbReference>
<dbReference type="Gene3D" id="4.10.910.10">
    <property type="entry name" value="30s ribosomal protein s13, domain 2"/>
    <property type="match status" value="1"/>
</dbReference>
<dbReference type="HAMAP" id="MF_01315">
    <property type="entry name" value="Ribosomal_uS13"/>
    <property type="match status" value="1"/>
</dbReference>
<dbReference type="InterPro" id="IPR027437">
    <property type="entry name" value="Rbsml_uS13_C"/>
</dbReference>
<dbReference type="InterPro" id="IPR001892">
    <property type="entry name" value="Ribosomal_uS13"/>
</dbReference>
<dbReference type="InterPro" id="IPR010979">
    <property type="entry name" value="Ribosomal_uS13-like_H2TH"/>
</dbReference>
<dbReference type="InterPro" id="IPR019980">
    <property type="entry name" value="Ribosomal_uS13_bac-type"/>
</dbReference>
<dbReference type="InterPro" id="IPR018269">
    <property type="entry name" value="Ribosomal_uS13_CS"/>
</dbReference>
<dbReference type="NCBIfam" id="TIGR03631">
    <property type="entry name" value="uS13_bact"/>
    <property type="match status" value="1"/>
</dbReference>
<dbReference type="PANTHER" id="PTHR10871">
    <property type="entry name" value="30S RIBOSOMAL PROTEIN S13/40S RIBOSOMAL PROTEIN S18"/>
    <property type="match status" value="1"/>
</dbReference>
<dbReference type="PANTHER" id="PTHR10871:SF1">
    <property type="entry name" value="SMALL RIBOSOMAL SUBUNIT PROTEIN US13M"/>
    <property type="match status" value="1"/>
</dbReference>
<dbReference type="Pfam" id="PF00416">
    <property type="entry name" value="Ribosomal_S13"/>
    <property type="match status" value="1"/>
</dbReference>
<dbReference type="PIRSF" id="PIRSF002134">
    <property type="entry name" value="Ribosomal_S13"/>
    <property type="match status" value="1"/>
</dbReference>
<dbReference type="SUPFAM" id="SSF46946">
    <property type="entry name" value="S13-like H2TH domain"/>
    <property type="match status" value="1"/>
</dbReference>
<dbReference type="PROSITE" id="PS00646">
    <property type="entry name" value="RIBOSOMAL_S13_1"/>
    <property type="match status" value="1"/>
</dbReference>
<dbReference type="PROSITE" id="PS50159">
    <property type="entry name" value="RIBOSOMAL_S13_2"/>
    <property type="match status" value="1"/>
</dbReference>
<gene>
    <name evidence="1" type="primary">rpsM</name>
    <name type="ordered locus">M28_Spy0067</name>
</gene>
<accession>Q48VS5</accession>